<protein>
    <recommendedName>
        <fullName evidence="1">Glutamyl-tRNA(Gln) amidotransferase subunit A</fullName>
        <shortName evidence="1">Glu-ADT subunit A</shortName>
        <ecNumber evidence="1">6.3.5.7</ecNumber>
    </recommendedName>
</protein>
<proteinExistence type="inferred from homology"/>
<reference key="1">
    <citation type="journal article" date="2008" name="Genome Res.">
        <title>Chlamydia trachomatis: genome sequence analysis of lymphogranuloma venereum isolates.</title>
        <authorList>
            <person name="Thomson N.R."/>
            <person name="Holden M.T.G."/>
            <person name="Carder C."/>
            <person name="Lennard N."/>
            <person name="Lockey S.J."/>
            <person name="Marsh P."/>
            <person name="Skipp P."/>
            <person name="O'Connor C.D."/>
            <person name="Goodhead I."/>
            <person name="Norbertzcak H."/>
            <person name="Harris B."/>
            <person name="Ormond D."/>
            <person name="Rance R."/>
            <person name="Quail M.A."/>
            <person name="Parkhill J."/>
            <person name="Stephens R.S."/>
            <person name="Clarke I.N."/>
        </authorList>
    </citation>
    <scope>NUCLEOTIDE SEQUENCE [LARGE SCALE GENOMIC DNA]</scope>
    <source>
        <strain>ATCC VR-902B / DSM 19102 / 434/Bu</strain>
    </source>
</reference>
<accession>B0B9B0</accession>
<dbReference type="EC" id="6.3.5.7" evidence="1"/>
<dbReference type="EMBL" id="AM884176">
    <property type="protein sequence ID" value="CAP03697.1"/>
    <property type="molecule type" value="Genomic_DNA"/>
</dbReference>
<dbReference type="RefSeq" id="WP_009872304.1">
    <property type="nucleotide sequence ID" value="NC_010287.1"/>
</dbReference>
<dbReference type="RefSeq" id="YP_001654342.1">
    <property type="nucleotide sequence ID" value="NC_010287.1"/>
</dbReference>
<dbReference type="SMR" id="B0B9B0"/>
<dbReference type="KEGG" id="ctb:CTL0258"/>
<dbReference type="PATRIC" id="fig|471472.4.peg.279"/>
<dbReference type="HOGENOM" id="CLU_009600_0_3_0"/>
<dbReference type="Proteomes" id="UP001154402">
    <property type="component" value="Chromosome"/>
</dbReference>
<dbReference type="GO" id="GO:0030956">
    <property type="term" value="C:glutamyl-tRNA(Gln) amidotransferase complex"/>
    <property type="evidence" value="ECO:0007669"/>
    <property type="project" value="InterPro"/>
</dbReference>
<dbReference type="GO" id="GO:0005524">
    <property type="term" value="F:ATP binding"/>
    <property type="evidence" value="ECO:0007669"/>
    <property type="project" value="UniProtKB-KW"/>
</dbReference>
<dbReference type="GO" id="GO:0050567">
    <property type="term" value="F:glutaminyl-tRNA synthase (glutamine-hydrolyzing) activity"/>
    <property type="evidence" value="ECO:0007669"/>
    <property type="project" value="UniProtKB-UniRule"/>
</dbReference>
<dbReference type="GO" id="GO:0006412">
    <property type="term" value="P:translation"/>
    <property type="evidence" value="ECO:0007669"/>
    <property type="project" value="UniProtKB-UniRule"/>
</dbReference>
<dbReference type="Gene3D" id="3.90.1300.10">
    <property type="entry name" value="Amidase signature (AS) domain"/>
    <property type="match status" value="1"/>
</dbReference>
<dbReference type="HAMAP" id="MF_00120">
    <property type="entry name" value="GatA"/>
    <property type="match status" value="1"/>
</dbReference>
<dbReference type="InterPro" id="IPR000120">
    <property type="entry name" value="Amidase"/>
</dbReference>
<dbReference type="InterPro" id="IPR020556">
    <property type="entry name" value="Amidase_CS"/>
</dbReference>
<dbReference type="InterPro" id="IPR023631">
    <property type="entry name" value="Amidase_dom"/>
</dbReference>
<dbReference type="InterPro" id="IPR036928">
    <property type="entry name" value="AS_sf"/>
</dbReference>
<dbReference type="InterPro" id="IPR004412">
    <property type="entry name" value="GatA"/>
</dbReference>
<dbReference type="NCBIfam" id="TIGR00132">
    <property type="entry name" value="gatA"/>
    <property type="match status" value="1"/>
</dbReference>
<dbReference type="PANTHER" id="PTHR11895:SF151">
    <property type="entry name" value="GLUTAMYL-TRNA(GLN) AMIDOTRANSFERASE SUBUNIT A"/>
    <property type="match status" value="1"/>
</dbReference>
<dbReference type="PANTHER" id="PTHR11895">
    <property type="entry name" value="TRANSAMIDASE"/>
    <property type="match status" value="1"/>
</dbReference>
<dbReference type="Pfam" id="PF01425">
    <property type="entry name" value="Amidase"/>
    <property type="match status" value="1"/>
</dbReference>
<dbReference type="SUPFAM" id="SSF75304">
    <property type="entry name" value="Amidase signature (AS) enzymes"/>
    <property type="match status" value="1"/>
</dbReference>
<dbReference type="PROSITE" id="PS00571">
    <property type="entry name" value="AMIDASES"/>
    <property type="match status" value="1"/>
</dbReference>
<evidence type="ECO:0000255" key="1">
    <source>
        <dbReference type="HAMAP-Rule" id="MF_00120"/>
    </source>
</evidence>
<name>GATA_CHLT2</name>
<feature type="chain" id="PRO_1000095121" description="Glutamyl-tRNA(Gln) amidotransferase subunit A">
    <location>
        <begin position="1"/>
        <end position="491"/>
    </location>
</feature>
<feature type="active site" description="Charge relay system" evidence="1">
    <location>
        <position position="77"/>
    </location>
</feature>
<feature type="active site" description="Charge relay system" evidence="1">
    <location>
        <position position="152"/>
    </location>
</feature>
<feature type="active site" description="Acyl-ester intermediate" evidence="1">
    <location>
        <position position="176"/>
    </location>
</feature>
<gene>
    <name evidence="1" type="primary">gatA</name>
    <name type="ordered locus">CTL0258</name>
</gene>
<comment type="function">
    <text evidence="1">Allows the formation of correctly charged Gln-tRNA(Gln) through the transamidation of misacylated Glu-tRNA(Gln) in organisms which lack glutaminyl-tRNA synthetase. The reaction takes place in the presence of glutamine and ATP through an activated gamma-phospho-Glu-tRNA(Gln).</text>
</comment>
<comment type="catalytic activity">
    <reaction evidence="1">
        <text>L-glutamyl-tRNA(Gln) + L-glutamine + ATP + H2O = L-glutaminyl-tRNA(Gln) + L-glutamate + ADP + phosphate + H(+)</text>
        <dbReference type="Rhea" id="RHEA:17521"/>
        <dbReference type="Rhea" id="RHEA-COMP:9681"/>
        <dbReference type="Rhea" id="RHEA-COMP:9684"/>
        <dbReference type="ChEBI" id="CHEBI:15377"/>
        <dbReference type="ChEBI" id="CHEBI:15378"/>
        <dbReference type="ChEBI" id="CHEBI:29985"/>
        <dbReference type="ChEBI" id="CHEBI:30616"/>
        <dbReference type="ChEBI" id="CHEBI:43474"/>
        <dbReference type="ChEBI" id="CHEBI:58359"/>
        <dbReference type="ChEBI" id="CHEBI:78520"/>
        <dbReference type="ChEBI" id="CHEBI:78521"/>
        <dbReference type="ChEBI" id="CHEBI:456216"/>
        <dbReference type="EC" id="6.3.5.7"/>
    </reaction>
</comment>
<comment type="subunit">
    <text evidence="1">Heterotrimer of A, B and C subunits.</text>
</comment>
<comment type="similarity">
    <text evidence="1">Belongs to the amidase family. GatA subfamily.</text>
</comment>
<keyword id="KW-0067">ATP-binding</keyword>
<keyword id="KW-0436">Ligase</keyword>
<keyword id="KW-0547">Nucleotide-binding</keyword>
<keyword id="KW-0648">Protein biosynthesis</keyword>
<organism>
    <name type="scientific">Chlamydia trachomatis serovar L2 (strain ATCC VR-902B / DSM 19102 / 434/Bu)</name>
    <dbReference type="NCBI Taxonomy" id="471472"/>
    <lineage>
        <taxon>Bacteria</taxon>
        <taxon>Pseudomonadati</taxon>
        <taxon>Chlamydiota</taxon>
        <taxon>Chlamydiia</taxon>
        <taxon>Chlamydiales</taxon>
        <taxon>Chlamydiaceae</taxon>
        <taxon>Chlamydia/Chlamydophila group</taxon>
        <taxon>Chlamydia</taxon>
    </lineage>
</organism>
<sequence>MYRKSALELRDAVVNRELSVTAITEYFYHRIESHDEQIGAFLSLCKERALLRASRIDDKLAKGDPIGLLAGIPIGVKDNIHITGVKTTCASKMLENFVAPFDSTVVRRIEMEDGILLGKLNMDEFAMGSTTRYSAFHPTNNPWDLERVPGGSSGGSAAAVSARFCPIALGSDTGGSIRQPAAFCGVVGFKPSYGAVSRYGLVAFGSSLDQIGPLTTVVEDVALAMDAFAGRDPKDSTTRDFFKGTFSQALSLEVPKLIGVPRGFLDGLQEDCKENFFEALAVMEREGSRIIDVDLSVLKHAVPVYYIVASAEAATNLARFDGVRYGHRCAQADNMHEMYARSRKEGFGKEVTRRILLGNYVLSAERQNIFYKKGMAVRARLIDAFQAAFERCDVIAMPVCATPAIRDQDVLDPVSLYLQDIYTVAVNLAYLPAISVPSGLSKEGLPLGVQFIGERGSDQQICQVGYSFQEHSQIKQLYPKAVNGLFDGGIE</sequence>